<proteinExistence type="uncertain"/>
<protein>
    <recommendedName>
        <fullName>Putative adhesin P1-like protein MPN_468</fullName>
    </recommendedName>
</protein>
<gene>
    <name type="ordered locus">MPN_468</name>
    <name type="ORF">MP373</name>
    <name type="ORF">P01_orf208V</name>
</gene>
<sequence length="208" mass="21805">MLDYIPWIGNGYRYGNGYKGVAGAGHSATNGSPAGNTSSTTQSNDVAPTFSNVGVGLKANVQGTLGDSQTTTVGGHQWPTLDPANLQLWTGAEWRNDSKTQNNTTTNENHTKFASATGSGQQQGSTTTTSAGNPDSLKQDKADKSGNSISVQEATSGDNLTNYTNLPPNLTPTSDWPNALSFTNKNNAQRAQLFLRGLLGSIPVLVNN</sequence>
<dbReference type="EMBL" id="U00089">
    <property type="protein sequence ID" value="AAB96021.1"/>
    <property type="molecule type" value="Genomic_DNA"/>
</dbReference>
<dbReference type="PIR" id="S73699">
    <property type="entry name" value="S73699"/>
</dbReference>
<dbReference type="RefSeq" id="NP_110156.1">
    <property type="nucleotide sequence ID" value="NC_000912.1"/>
</dbReference>
<dbReference type="SMR" id="P75315"/>
<dbReference type="STRING" id="272634.MPN_468"/>
<dbReference type="EnsemblBacteria" id="AAB96021">
    <property type="protein sequence ID" value="AAB96021"/>
    <property type="gene ID" value="MPN_468"/>
</dbReference>
<dbReference type="KEGG" id="mpn:MPN_468"/>
<dbReference type="PATRIC" id="fig|272634.6.peg.506"/>
<dbReference type="HOGENOM" id="CLU_108892_0_0_14"/>
<dbReference type="BioCyc" id="MPNE272634:G1GJ3-767-MONOMER"/>
<dbReference type="Proteomes" id="UP000000808">
    <property type="component" value="Chromosome"/>
</dbReference>
<accession>P75315</accession>
<evidence type="ECO:0000256" key="1">
    <source>
        <dbReference type="SAM" id="MobiDB-lite"/>
    </source>
</evidence>
<evidence type="ECO:0000305" key="2"/>
<comment type="similarity">
    <text evidence="2">Belongs to the adhesin P1 family.</text>
</comment>
<comment type="caution">
    <text evidence="2">Could be the product of a pseudogene.</text>
</comment>
<feature type="chain" id="PRO_0000210715" description="Putative adhesin P1-like protein MPN_468">
    <location>
        <begin position="1"/>
        <end position="208"/>
    </location>
</feature>
<feature type="region of interest" description="Disordered" evidence="1">
    <location>
        <begin position="29"/>
        <end position="49"/>
    </location>
</feature>
<feature type="region of interest" description="Disordered" evidence="1">
    <location>
        <begin position="97"/>
        <end position="172"/>
    </location>
</feature>
<feature type="compositionally biased region" description="Low complexity" evidence="1">
    <location>
        <begin position="100"/>
        <end position="132"/>
    </location>
</feature>
<feature type="compositionally biased region" description="Polar residues" evidence="1">
    <location>
        <begin position="145"/>
        <end position="158"/>
    </location>
</feature>
<feature type="compositionally biased region" description="Low complexity" evidence="1">
    <location>
        <begin position="159"/>
        <end position="172"/>
    </location>
</feature>
<reference key="1">
    <citation type="journal article" date="1996" name="Nucleic Acids Res.">
        <title>Complete sequence analysis of the genome of the bacterium Mycoplasma pneumoniae.</title>
        <authorList>
            <person name="Himmelreich R."/>
            <person name="Hilbert H."/>
            <person name="Plagens H."/>
            <person name="Pirkl E."/>
            <person name="Li B.-C."/>
            <person name="Herrmann R."/>
        </authorList>
    </citation>
    <scope>NUCLEOTIDE SEQUENCE [LARGE SCALE GENOMIC DNA]</scope>
    <source>
        <strain>ATCC 29342 / M129 / Subtype 1</strain>
    </source>
</reference>
<name>Y468_MYCPN</name>
<organism>
    <name type="scientific">Mycoplasma pneumoniae (strain ATCC 29342 / M129 / Subtype 1)</name>
    <name type="common">Mycoplasmoides pneumoniae</name>
    <dbReference type="NCBI Taxonomy" id="272634"/>
    <lineage>
        <taxon>Bacteria</taxon>
        <taxon>Bacillati</taxon>
        <taxon>Mycoplasmatota</taxon>
        <taxon>Mycoplasmoidales</taxon>
        <taxon>Mycoplasmoidaceae</taxon>
        <taxon>Mycoplasmoides</taxon>
    </lineage>
</organism>
<keyword id="KW-1185">Reference proteome</keyword>